<accession>B3ED33</accession>
<comment type="similarity">
    <text evidence="1">Belongs to the bacterial ribosomal protein bS16 family.</text>
</comment>
<proteinExistence type="inferred from homology"/>
<reference key="1">
    <citation type="submission" date="2008-05" db="EMBL/GenBank/DDBJ databases">
        <title>Complete sequence of Chlorobium limicola DSM 245.</title>
        <authorList>
            <consortium name="US DOE Joint Genome Institute"/>
            <person name="Lucas S."/>
            <person name="Copeland A."/>
            <person name="Lapidus A."/>
            <person name="Glavina del Rio T."/>
            <person name="Dalin E."/>
            <person name="Tice H."/>
            <person name="Bruce D."/>
            <person name="Goodwin L."/>
            <person name="Pitluck S."/>
            <person name="Schmutz J."/>
            <person name="Larimer F."/>
            <person name="Land M."/>
            <person name="Hauser L."/>
            <person name="Kyrpides N."/>
            <person name="Ovchinnikova G."/>
            <person name="Zhao F."/>
            <person name="Li T."/>
            <person name="Liu Z."/>
            <person name="Overmann J."/>
            <person name="Bryant D.A."/>
            <person name="Richardson P."/>
        </authorList>
    </citation>
    <scope>NUCLEOTIDE SEQUENCE [LARGE SCALE GENOMIC DNA]</scope>
    <source>
        <strain>DSM 245 / NBRC 103803 / 6330</strain>
    </source>
</reference>
<gene>
    <name evidence="1" type="primary">rpsP</name>
    <name type="ordered locus">Clim_1398</name>
</gene>
<feature type="chain" id="PRO_1000196363" description="Small ribosomal subunit protein bS16">
    <location>
        <begin position="1"/>
        <end position="133"/>
    </location>
</feature>
<feature type="region of interest" description="Disordered" evidence="2">
    <location>
        <begin position="99"/>
        <end position="133"/>
    </location>
</feature>
<feature type="compositionally biased region" description="Basic residues" evidence="2">
    <location>
        <begin position="109"/>
        <end position="123"/>
    </location>
</feature>
<feature type="compositionally biased region" description="Basic and acidic residues" evidence="2">
    <location>
        <begin position="124"/>
        <end position="133"/>
    </location>
</feature>
<sequence>MVKIRLKRTGRKKLPFYQIVAADSRAPRDGKFLEIVGHYQPTAKPHAVTIKKDRVSYWMQTGAQPTDTVRSLIRSTGLLHELRLRSLGRSEADITAEMEKWQQNQTERRQKRLAVKTRRRQAKKAAEAKGAEA</sequence>
<dbReference type="EMBL" id="CP001097">
    <property type="protein sequence ID" value="ACD90458.1"/>
    <property type="molecule type" value="Genomic_DNA"/>
</dbReference>
<dbReference type="RefSeq" id="WP_012466335.1">
    <property type="nucleotide sequence ID" value="NC_010803.1"/>
</dbReference>
<dbReference type="SMR" id="B3ED33"/>
<dbReference type="STRING" id="290315.Clim_1398"/>
<dbReference type="KEGG" id="cli:Clim_1398"/>
<dbReference type="eggNOG" id="COG0228">
    <property type="taxonomic scope" value="Bacteria"/>
</dbReference>
<dbReference type="HOGENOM" id="CLU_100590_3_2_10"/>
<dbReference type="OrthoDB" id="9807878at2"/>
<dbReference type="Proteomes" id="UP000008841">
    <property type="component" value="Chromosome"/>
</dbReference>
<dbReference type="GO" id="GO:0005737">
    <property type="term" value="C:cytoplasm"/>
    <property type="evidence" value="ECO:0007669"/>
    <property type="project" value="UniProtKB-ARBA"/>
</dbReference>
<dbReference type="GO" id="GO:0015935">
    <property type="term" value="C:small ribosomal subunit"/>
    <property type="evidence" value="ECO:0007669"/>
    <property type="project" value="TreeGrafter"/>
</dbReference>
<dbReference type="GO" id="GO:0003735">
    <property type="term" value="F:structural constituent of ribosome"/>
    <property type="evidence" value="ECO:0007669"/>
    <property type="project" value="InterPro"/>
</dbReference>
<dbReference type="GO" id="GO:0006412">
    <property type="term" value="P:translation"/>
    <property type="evidence" value="ECO:0007669"/>
    <property type="project" value="UniProtKB-UniRule"/>
</dbReference>
<dbReference type="Gene3D" id="3.30.1320.10">
    <property type="match status" value="1"/>
</dbReference>
<dbReference type="HAMAP" id="MF_00385">
    <property type="entry name" value="Ribosomal_bS16"/>
    <property type="match status" value="1"/>
</dbReference>
<dbReference type="InterPro" id="IPR000307">
    <property type="entry name" value="Ribosomal_bS16"/>
</dbReference>
<dbReference type="InterPro" id="IPR020592">
    <property type="entry name" value="Ribosomal_bS16_CS"/>
</dbReference>
<dbReference type="InterPro" id="IPR023803">
    <property type="entry name" value="Ribosomal_bS16_dom_sf"/>
</dbReference>
<dbReference type="NCBIfam" id="TIGR00002">
    <property type="entry name" value="S16"/>
    <property type="match status" value="1"/>
</dbReference>
<dbReference type="PANTHER" id="PTHR12919">
    <property type="entry name" value="30S RIBOSOMAL PROTEIN S16"/>
    <property type="match status" value="1"/>
</dbReference>
<dbReference type="PANTHER" id="PTHR12919:SF20">
    <property type="entry name" value="SMALL RIBOSOMAL SUBUNIT PROTEIN BS16M"/>
    <property type="match status" value="1"/>
</dbReference>
<dbReference type="Pfam" id="PF00886">
    <property type="entry name" value="Ribosomal_S16"/>
    <property type="match status" value="1"/>
</dbReference>
<dbReference type="SUPFAM" id="SSF54565">
    <property type="entry name" value="Ribosomal protein S16"/>
    <property type="match status" value="1"/>
</dbReference>
<dbReference type="PROSITE" id="PS00732">
    <property type="entry name" value="RIBOSOMAL_S16"/>
    <property type="match status" value="1"/>
</dbReference>
<protein>
    <recommendedName>
        <fullName evidence="1">Small ribosomal subunit protein bS16</fullName>
    </recommendedName>
    <alternativeName>
        <fullName evidence="3">30S ribosomal protein S16</fullName>
    </alternativeName>
</protein>
<name>RS16_CHLL2</name>
<keyword id="KW-0687">Ribonucleoprotein</keyword>
<keyword id="KW-0689">Ribosomal protein</keyword>
<organism>
    <name type="scientific">Chlorobium limicola (strain DSM 245 / NBRC 103803 / 6330)</name>
    <dbReference type="NCBI Taxonomy" id="290315"/>
    <lineage>
        <taxon>Bacteria</taxon>
        <taxon>Pseudomonadati</taxon>
        <taxon>Chlorobiota</taxon>
        <taxon>Chlorobiia</taxon>
        <taxon>Chlorobiales</taxon>
        <taxon>Chlorobiaceae</taxon>
        <taxon>Chlorobium/Pelodictyon group</taxon>
        <taxon>Chlorobium</taxon>
    </lineage>
</organism>
<evidence type="ECO:0000255" key="1">
    <source>
        <dbReference type="HAMAP-Rule" id="MF_00385"/>
    </source>
</evidence>
<evidence type="ECO:0000256" key="2">
    <source>
        <dbReference type="SAM" id="MobiDB-lite"/>
    </source>
</evidence>
<evidence type="ECO:0000305" key="3"/>